<gene>
    <name type="primary">BFAR</name>
    <name type="synonym">BAR</name>
    <name type="synonym">RNF47</name>
</gene>
<protein>
    <recommendedName>
        <fullName>Bifunctional apoptosis regulator</fullName>
        <ecNumber evidence="7 9 10">2.3.2.27</ecNumber>
    </recommendedName>
    <alternativeName>
        <fullName>RING finger protein 47</fullName>
    </alternativeName>
</protein>
<accession>Q9NZS9</accession>
<accession>A8K4Z9</accession>
<accession>B4DUT0</accession>
<accession>D3DUG8</accession>
<feature type="chain" id="PRO_0000055822" description="Bifunctional apoptosis regulator">
    <location>
        <begin position="1"/>
        <end position="450"/>
    </location>
</feature>
<feature type="topological domain" description="Cytoplasmic" evidence="1">
    <location>
        <begin position="1"/>
        <end position="140"/>
    </location>
</feature>
<feature type="transmembrane region" description="Helical" evidence="1">
    <location>
        <begin position="141"/>
        <end position="161"/>
    </location>
</feature>
<feature type="topological domain" description="Lumenal" evidence="1">
    <location>
        <begin position="162"/>
        <end position="331"/>
    </location>
</feature>
<feature type="transmembrane region" description="Helical" evidence="1">
    <location>
        <begin position="332"/>
        <end position="352"/>
    </location>
</feature>
<feature type="topological domain" description="Cytoplasmic" evidence="1">
    <location>
        <begin position="353"/>
        <end position="360"/>
    </location>
</feature>
<feature type="transmembrane region" description="Helical" evidence="1">
    <location>
        <begin position="361"/>
        <end position="381"/>
    </location>
</feature>
<feature type="topological domain" description="Lumenal" evidence="1">
    <location>
        <begin position="382"/>
        <end position="404"/>
    </location>
</feature>
<feature type="transmembrane region" description="Helical" evidence="1">
    <location>
        <begin position="405"/>
        <end position="425"/>
    </location>
</feature>
<feature type="topological domain" description="Cytoplasmic" evidence="1">
    <location>
        <begin position="426"/>
        <end position="450"/>
    </location>
</feature>
<feature type="domain" description="SAM" evidence="3">
    <location>
        <begin position="182"/>
        <end position="249"/>
    </location>
</feature>
<feature type="zinc finger region" description="RING-type" evidence="2">
    <location>
        <begin position="34"/>
        <end position="74"/>
    </location>
</feature>
<feature type="region of interest" description="Disordered" evidence="4">
    <location>
        <begin position="1"/>
        <end position="20"/>
    </location>
</feature>
<feature type="glycosylation site" description="N-linked (GlcNAc...) asparagine" evidence="1">
    <location>
        <position position="232"/>
    </location>
</feature>
<feature type="splice variant" id="VSP_055879" description="In isoform 2." evidence="11">
    <original>MEEPQKSYVNTMDLERDEPLKSTGPQIS</original>
    <variation>MVGIFKENRMSRMQRKMGRFPQSQYSPQ</variation>
    <location>
        <begin position="1"/>
        <end position="28"/>
    </location>
</feature>
<feature type="splice variant" id="VSP_055880" description="In isoform 2." evidence="11">
    <location>
        <begin position="29"/>
        <end position="156"/>
    </location>
</feature>
<feature type="sequence variant" id="VAR_052075" description="In dbSNP:rs11546303.">
    <original>M</original>
    <variation>R</variation>
    <location>
        <position position="140"/>
    </location>
</feature>
<feature type="sequence variant" id="VAR_052076" description="In dbSNP:rs35377618.">
    <original>R</original>
    <variation>H</variation>
    <location>
        <position position="245"/>
    </location>
</feature>
<comment type="function">
    <text evidence="6 7 8 9 10">Membrane-bound E3 ubiquitin ligase that plays a role in several processes including apoptosis regulation or reticulum endoplasmic stress (PubMed:14502241, PubMed:21068390). Has anti-apoptotic activity, both for apoptosis triggered via death-receptors and via mitochondrial factors (PubMed:14502241). Contributes to the dynamic control of IRE1/ERN1 signaling during ER stress by inducing BAX inhibitor 1/TMBIM6 proteasomal degradation (PubMed:21068390). Promotes the activation of TGF-beta signaling by mediating the 'Lys-63'-linked ubiquitination of TGFBR1 which is critical to activate the pathway (PubMed:33914044). Together with NGFR, negatively regulates NF-kappa-B and JNK-related signaling pathways (PubMed:22566094). Promotes the proteasome-mediated degradation of PNPLA3, a protein involveld in lipid metabolism (PubMed:38294943).</text>
</comment>
<comment type="catalytic activity">
    <reaction evidence="7 9 10">
        <text>S-ubiquitinyl-[E2 ubiquitin-conjugating enzyme]-L-cysteine + [acceptor protein]-L-lysine = [E2 ubiquitin-conjugating enzyme]-L-cysteine + N(6)-ubiquitinyl-[acceptor protein]-L-lysine.</text>
        <dbReference type="EC" id="2.3.2.27"/>
    </reaction>
</comment>
<comment type="subunit">
    <text evidence="5 6 7">Interacts with CASP8, BCL2 and BCL2L1 through SAM domain and also with HIP1, IFT57, ESRRBL1 and BCAP31. Interacts with NGFR; this interaction inhibits NF-kappa-B and JNK-related signaling pathways (PubMed:22566094).</text>
</comment>
<comment type="interaction">
    <interactant intactId="EBI-2130199">
        <id>Q9NZS9</id>
    </interactant>
    <interactant intactId="EBI-473850">
        <id>P61086</id>
        <label>UBE2K</label>
    </interactant>
    <organismsDiffer>false</organismsDiffer>
    <experiments>6</experiments>
</comment>
<comment type="subcellular location">
    <subcellularLocation>
        <location evidence="5 6 7 8">Endoplasmic reticulum membrane</location>
        <topology evidence="5 6">Multi-pass membrane protein</topology>
    </subcellularLocation>
</comment>
<comment type="alternative products">
    <event type="alternative splicing"/>
    <isoform>
        <id>Q9NZS9-1</id>
        <name>1</name>
        <sequence type="displayed"/>
    </isoform>
    <isoform>
        <id>Q9NZS9-2</id>
        <name>2</name>
        <sequence type="described" ref="VSP_055879 VSP_055880"/>
    </isoform>
</comment>
<comment type="tissue specificity">
    <text evidence="5 6">Expressed highly in brain, moderately in small intestine, weakly in testes and only faintly in liver and skeletal muscle. Not expressed in heart, kidney, lung and spleen.</text>
</comment>
<comment type="PTM">
    <text evidence="7">Mediates RING-dependent self-ubiquitination leading to proteasomal degradation.</text>
</comment>
<dbReference type="EC" id="2.3.2.27" evidence="7 9 10"/>
<dbReference type="EMBL" id="AF173003">
    <property type="protein sequence ID" value="AAF59975.1"/>
    <property type="molecule type" value="mRNA"/>
</dbReference>
<dbReference type="EMBL" id="AK291114">
    <property type="protein sequence ID" value="BAF83803.1"/>
    <property type="molecule type" value="mRNA"/>
</dbReference>
<dbReference type="EMBL" id="AK300778">
    <property type="protein sequence ID" value="BAG62442.1"/>
    <property type="molecule type" value="mRNA"/>
</dbReference>
<dbReference type="EMBL" id="AC009167">
    <property type="status" value="NOT_ANNOTATED_CDS"/>
    <property type="molecule type" value="Genomic_DNA"/>
</dbReference>
<dbReference type="EMBL" id="CH471112">
    <property type="protein sequence ID" value="EAW85105.1"/>
    <property type="molecule type" value="Genomic_DNA"/>
</dbReference>
<dbReference type="EMBL" id="CH471112">
    <property type="protein sequence ID" value="EAW85108.1"/>
    <property type="molecule type" value="Genomic_DNA"/>
</dbReference>
<dbReference type="EMBL" id="BC003054">
    <property type="protein sequence ID" value="AAH03054.1"/>
    <property type="molecule type" value="mRNA"/>
</dbReference>
<dbReference type="CCDS" id="CCDS10554.1">
    <molecule id="Q9NZS9-1"/>
</dbReference>
<dbReference type="RefSeq" id="NP_057645.1">
    <molecule id="Q9NZS9-1"/>
    <property type="nucleotide sequence ID" value="NM_016561.3"/>
</dbReference>
<dbReference type="RefSeq" id="XP_005255407.1">
    <molecule id="Q9NZS9-2"/>
    <property type="nucleotide sequence ID" value="XM_005255350.3"/>
</dbReference>
<dbReference type="RefSeq" id="XP_054185077.1">
    <molecule id="Q9NZS9-2"/>
    <property type="nucleotide sequence ID" value="XM_054329102.1"/>
</dbReference>
<dbReference type="RefSeq" id="XP_054236412.1">
    <molecule id="Q9NZS9-2"/>
    <property type="nucleotide sequence ID" value="XM_054380437.1"/>
</dbReference>
<dbReference type="SMR" id="Q9NZS9"/>
<dbReference type="BioGRID" id="119435">
    <property type="interactions" value="35"/>
</dbReference>
<dbReference type="CORUM" id="Q9NZS9"/>
<dbReference type="FunCoup" id="Q9NZS9">
    <property type="interactions" value="1419"/>
</dbReference>
<dbReference type="IntAct" id="Q9NZS9">
    <property type="interactions" value="12"/>
</dbReference>
<dbReference type="STRING" id="9606.ENSP00000261658"/>
<dbReference type="GlyCosmos" id="Q9NZS9">
    <property type="glycosylation" value="1 site, No reported glycans"/>
</dbReference>
<dbReference type="GlyGen" id="Q9NZS9">
    <property type="glycosylation" value="1 site, 1 N-linked glycan (1 site)"/>
</dbReference>
<dbReference type="iPTMnet" id="Q9NZS9"/>
<dbReference type="PhosphoSitePlus" id="Q9NZS9"/>
<dbReference type="BioMuta" id="BFAR"/>
<dbReference type="DMDM" id="74753089"/>
<dbReference type="jPOST" id="Q9NZS9"/>
<dbReference type="MassIVE" id="Q9NZS9"/>
<dbReference type="PaxDb" id="9606-ENSP00000261658"/>
<dbReference type="PeptideAtlas" id="Q9NZS9"/>
<dbReference type="ProteomicsDB" id="5213"/>
<dbReference type="ProteomicsDB" id="83505">
    <molecule id="Q9NZS9-1"/>
</dbReference>
<dbReference type="Pumba" id="Q9NZS9"/>
<dbReference type="Antibodypedia" id="24873">
    <property type="antibodies" value="211 antibodies from 28 providers"/>
</dbReference>
<dbReference type="DNASU" id="51283"/>
<dbReference type="Ensembl" id="ENST00000261658.7">
    <molecule id="Q9NZS9-1"/>
    <property type="protein sequence ID" value="ENSP00000261658.2"/>
    <property type="gene ID" value="ENSG00000103429.11"/>
</dbReference>
<dbReference type="Ensembl" id="ENST00000619034.2">
    <molecule id="Q9NZS9-1"/>
    <property type="protein sequence ID" value="ENSP00000478190.1"/>
    <property type="gene ID" value="ENSG00000275618.2"/>
</dbReference>
<dbReference type="GeneID" id="51283"/>
<dbReference type="KEGG" id="hsa:51283"/>
<dbReference type="MANE-Select" id="ENST00000261658.7">
    <property type="protein sequence ID" value="ENSP00000261658.2"/>
    <property type="RefSeq nucleotide sequence ID" value="NM_016561.3"/>
    <property type="RefSeq protein sequence ID" value="NP_057645.1"/>
</dbReference>
<dbReference type="UCSC" id="uc002dco.4">
    <molecule id="Q9NZS9-1"/>
    <property type="organism name" value="human"/>
</dbReference>
<dbReference type="AGR" id="HGNC:17613"/>
<dbReference type="CTD" id="51283"/>
<dbReference type="DisGeNET" id="51283"/>
<dbReference type="GeneCards" id="BFAR"/>
<dbReference type="HGNC" id="HGNC:17613">
    <property type="gene designation" value="BFAR"/>
</dbReference>
<dbReference type="HPA" id="ENSG00000103429">
    <property type="expression patterns" value="Low tissue specificity"/>
</dbReference>
<dbReference type="MIM" id="619516">
    <property type="type" value="gene"/>
</dbReference>
<dbReference type="neXtProt" id="NX_Q9NZS9"/>
<dbReference type="OpenTargets" id="ENSG00000103429"/>
<dbReference type="PharmGKB" id="PA38460"/>
<dbReference type="VEuPathDB" id="HostDB:ENSG00000103429"/>
<dbReference type="eggNOG" id="KOG4159">
    <property type="taxonomic scope" value="Eukaryota"/>
</dbReference>
<dbReference type="GeneTree" id="ENSGT00390000005386"/>
<dbReference type="InParanoid" id="Q9NZS9"/>
<dbReference type="OMA" id="GNDQMPT"/>
<dbReference type="OrthoDB" id="6105938at2759"/>
<dbReference type="PAN-GO" id="Q9NZS9">
    <property type="GO annotations" value="2 GO annotations based on evolutionary models"/>
</dbReference>
<dbReference type="PhylomeDB" id="Q9NZS9"/>
<dbReference type="TreeFam" id="TF332303"/>
<dbReference type="PathwayCommons" id="Q9NZS9"/>
<dbReference type="SignaLink" id="Q9NZS9"/>
<dbReference type="SIGNOR" id="Q9NZS9"/>
<dbReference type="BioGRID-ORCS" id="51283">
    <property type="hits" value="20 hits in 1199 CRISPR screens"/>
</dbReference>
<dbReference type="ChiTaRS" id="BFAR">
    <property type="organism name" value="human"/>
</dbReference>
<dbReference type="GenomeRNAi" id="51283"/>
<dbReference type="Pharos" id="Q9NZS9">
    <property type="development level" value="Tbio"/>
</dbReference>
<dbReference type="PRO" id="PR:Q9NZS9"/>
<dbReference type="Proteomes" id="UP000005640">
    <property type="component" value="Chromosome 16"/>
</dbReference>
<dbReference type="RNAct" id="Q9NZS9">
    <property type="molecule type" value="protein"/>
</dbReference>
<dbReference type="Bgee" id="ENSG00000103429">
    <property type="expression patterns" value="Expressed in islet of Langerhans and 104 other cell types or tissues"/>
</dbReference>
<dbReference type="ExpressionAtlas" id="Q9NZS9">
    <property type="expression patterns" value="baseline and differential"/>
</dbReference>
<dbReference type="GO" id="GO:0005783">
    <property type="term" value="C:endoplasmic reticulum"/>
    <property type="evidence" value="ECO:0000314"/>
    <property type="project" value="ParkinsonsUK-UCL"/>
</dbReference>
<dbReference type="GO" id="GO:0005789">
    <property type="term" value="C:endoplasmic reticulum membrane"/>
    <property type="evidence" value="ECO:0000303"/>
    <property type="project" value="ParkinsonsUK-UCL"/>
</dbReference>
<dbReference type="GO" id="GO:0016020">
    <property type="term" value="C:membrane"/>
    <property type="evidence" value="ECO:0000314"/>
    <property type="project" value="MGI"/>
</dbReference>
<dbReference type="GO" id="GO:0005886">
    <property type="term" value="C:plasma membrane"/>
    <property type="evidence" value="ECO:0000303"/>
    <property type="project" value="ParkinsonsUK-UCL"/>
</dbReference>
<dbReference type="GO" id="GO:0089720">
    <property type="term" value="F:caspase binding"/>
    <property type="evidence" value="ECO:0000314"/>
    <property type="project" value="ParkinsonsUK-UCL"/>
</dbReference>
<dbReference type="GO" id="GO:0030674">
    <property type="term" value="F:protein-macromolecule adaptor activity"/>
    <property type="evidence" value="ECO:0000314"/>
    <property type="project" value="ParkinsonsUK-UCL"/>
</dbReference>
<dbReference type="GO" id="GO:0061630">
    <property type="term" value="F:ubiquitin protein ligase activity"/>
    <property type="evidence" value="ECO:0000314"/>
    <property type="project" value="ParkinsonsUK-UCL"/>
</dbReference>
<dbReference type="GO" id="GO:0008270">
    <property type="term" value="F:zinc ion binding"/>
    <property type="evidence" value="ECO:0007669"/>
    <property type="project" value="UniProtKB-KW"/>
</dbReference>
<dbReference type="GO" id="GO:0006915">
    <property type="term" value="P:apoptotic process"/>
    <property type="evidence" value="ECO:0007669"/>
    <property type="project" value="UniProtKB-KW"/>
</dbReference>
<dbReference type="GO" id="GO:0043066">
    <property type="term" value="P:negative regulation of apoptotic process"/>
    <property type="evidence" value="ECO:0000314"/>
    <property type="project" value="MGI"/>
</dbReference>
<dbReference type="GO" id="GO:1903895">
    <property type="term" value="P:negative regulation of IRE1-mediated unfolded protein response"/>
    <property type="evidence" value="ECO:0000315"/>
    <property type="project" value="ParkinsonsUK-UCL"/>
</dbReference>
<dbReference type="GO" id="GO:0043161">
    <property type="term" value="P:proteasome-mediated ubiquitin-dependent protein catabolic process"/>
    <property type="evidence" value="ECO:0000314"/>
    <property type="project" value="ParkinsonsUK-UCL"/>
</dbReference>
<dbReference type="GO" id="GO:0051865">
    <property type="term" value="P:protein autoubiquitination"/>
    <property type="evidence" value="ECO:0000314"/>
    <property type="project" value="ParkinsonsUK-UCL"/>
</dbReference>
<dbReference type="GO" id="GO:0070936">
    <property type="term" value="P:protein K48-linked ubiquitination"/>
    <property type="evidence" value="ECO:0000314"/>
    <property type="project" value="ParkinsonsUK-UCL"/>
</dbReference>
<dbReference type="GO" id="GO:0070534">
    <property type="term" value="P:protein K63-linked ubiquitination"/>
    <property type="evidence" value="ECO:0000314"/>
    <property type="project" value="ParkinsonsUK-UCL"/>
</dbReference>
<dbReference type="GO" id="GO:0000209">
    <property type="term" value="P:protein polyubiquitination"/>
    <property type="evidence" value="ECO:0000314"/>
    <property type="project" value="ParkinsonsUK-UCL"/>
</dbReference>
<dbReference type="GO" id="GO:0006511">
    <property type="term" value="P:ubiquitin-dependent protein catabolic process"/>
    <property type="evidence" value="ECO:0000314"/>
    <property type="project" value="ParkinsonsUK-UCL"/>
</dbReference>
<dbReference type="CDD" id="cd16497">
    <property type="entry name" value="RING-HC_BAR"/>
    <property type="match status" value="1"/>
</dbReference>
<dbReference type="CDD" id="cd09513">
    <property type="entry name" value="SAM_BAR"/>
    <property type="match status" value="1"/>
</dbReference>
<dbReference type="FunFam" id="1.10.150.50:FF:000053">
    <property type="entry name" value="Bifunctional apoptosis regulator"/>
    <property type="match status" value="1"/>
</dbReference>
<dbReference type="FunFam" id="3.30.40.10:FF:000331">
    <property type="entry name" value="Bifunctional apoptosis regulator"/>
    <property type="match status" value="1"/>
</dbReference>
<dbReference type="Gene3D" id="1.10.150.50">
    <property type="entry name" value="Transcription Factor, Ets-1"/>
    <property type="match status" value="1"/>
</dbReference>
<dbReference type="Gene3D" id="3.30.40.10">
    <property type="entry name" value="Zinc/RING finger domain, C3HC4 (zinc finger)"/>
    <property type="match status" value="1"/>
</dbReference>
<dbReference type="InterPro" id="IPR001660">
    <property type="entry name" value="SAM"/>
</dbReference>
<dbReference type="InterPro" id="IPR013761">
    <property type="entry name" value="SAM/pointed_sf"/>
</dbReference>
<dbReference type="InterPro" id="IPR001841">
    <property type="entry name" value="Znf_RING"/>
</dbReference>
<dbReference type="InterPro" id="IPR013083">
    <property type="entry name" value="Znf_RING/FYVE/PHD"/>
</dbReference>
<dbReference type="InterPro" id="IPR017907">
    <property type="entry name" value="Znf_RING_CS"/>
</dbReference>
<dbReference type="PANTHER" id="PTHR15898">
    <property type="entry name" value="BIFUNCTIONAL APOPTOSIS REGULATOR"/>
    <property type="match status" value="1"/>
</dbReference>
<dbReference type="PANTHER" id="PTHR15898:SF13">
    <property type="entry name" value="BIFUNCTIONAL APOPTOSIS REGULATOR"/>
    <property type="match status" value="1"/>
</dbReference>
<dbReference type="Pfam" id="PF00536">
    <property type="entry name" value="SAM_1"/>
    <property type="match status" value="1"/>
</dbReference>
<dbReference type="Pfam" id="PF15227">
    <property type="entry name" value="zf-C3HC4_4"/>
    <property type="match status" value="1"/>
</dbReference>
<dbReference type="SMART" id="SM00184">
    <property type="entry name" value="RING"/>
    <property type="match status" value="1"/>
</dbReference>
<dbReference type="SMART" id="SM00454">
    <property type="entry name" value="SAM"/>
    <property type="match status" value="1"/>
</dbReference>
<dbReference type="SUPFAM" id="SSF57850">
    <property type="entry name" value="RING/U-box"/>
    <property type="match status" value="1"/>
</dbReference>
<dbReference type="SUPFAM" id="SSF47769">
    <property type="entry name" value="SAM/Pointed domain"/>
    <property type="match status" value="1"/>
</dbReference>
<dbReference type="PROSITE" id="PS50105">
    <property type="entry name" value="SAM_DOMAIN"/>
    <property type="match status" value="1"/>
</dbReference>
<dbReference type="PROSITE" id="PS00518">
    <property type="entry name" value="ZF_RING_1"/>
    <property type="match status" value="1"/>
</dbReference>
<dbReference type="PROSITE" id="PS50089">
    <property type="entry name" value="ZF_RING_2"/>
    <property type="match status" value="1"/>
</dbReference>
<evidence type="ECO:0000255" key="1"/>
<evidence type="ECO:0000255" key="2">
    <source>
        <dbReference type="PROSITE-ProRule" id="PRU00175"/>
    </source>
</evidence>
<evidence type="ECO:0000255" key="3">
    <source>
        <dbReference type="PROSITE-ProRule" id="PRU00184"/>
    </source>
</evidence>
<evidence type="ECO:0000256" key="4">
    <source>
        <dbReference type="SAM" id="MobiDB-lite"/>
    </source>
</evidence>
<evidence type="ECO:0000269" key="5">
    <source>
    </source>
</evidence>
<evidence type="ECO:0000269" key="6">
    <source>
    </source>
</evidence>
<evidence type="ECO:0000269" key="7">
    <source>
    </source>
</evidence>
<evidence type="ECO:0000269" key="8">
    <source>
    </source>
</evidence>
<evidence type="ECO:0000269" key="9">
    <source>
    </source>
</evidence>
<evidence type="ECO:0000269" key="10">
    <source>
    </source>
</evidence>
<evidence type="ECO:0000305" key="11"/>
<organism>
    <name type="scientific">Homo sapiens</name>
    <name type="common">Human</name>
    <dbReference type="NCBI Taxonomy" id="9606"/>
    <lineage>
        <taxon>Eukaryota</taxon>
        <taxon>Metazoa</taxon>
        <taxon>Chordata</taxon>
        <taxon>Craniata</taxon>
        <taxon>Vertebrata</taxon>
        <taxon>Euteleostomi</taxon>
        <taxon>Mammalia</taxon>
        <taxon>Eutheria</taxon>
        <taxon>Euarchontoglires</taxon>
        <taxon>Primates</taxon>
        <taxon>Haplorrhini</taxon>
        <taxon>Catarrhini</taxon>
        <taxon>Hominidae</taxon>
        <taxon>Homo</taxon>
    </lineage>
</organism>
<keyword id="KW-0025">Alternative splicing</keyword>
<keyword id="KW-0053">Apoptosis</keyword>
<keyword id="KW-0256">Endoplasmic reticulum</keyword>
<keyword id="KW-0325">Glycoprotein</keyword>
<keyword id="KW-0472">Membrane</keyword>
<keyword id="KW-0479">Metal-binding</keyword>
<keyword id="KW-1267">Proteomics identification</keyword>
<keyword id="KW-1185">Reference proteome</keyword>
<keyword id="KW-0808">Transferase</keyword>
<keyword id="KW-0812">Transmembrane</keyword>
<keyword id="KW-1133">Transmembrane helix</keyword>
<keyword id="KW-0832">Ubl conjugation</keyword>
<keyword id="KW-0862">Zinc</keyword>
<keyword id="KW-0863">Zinc-finger</keyword>
<reference key="1">
    <citation type="journal article" date="2000" name="Proc. Natl. Acad. Sci. U.S.A.">
        <title>BAR: an apoptosis regulator at the intersection of caspases and Bcl-2 family proteins.</title>
        <authorList>
            <person name="Zhang H."/>
            <person name="Xu Q."/>
            <person name="Krajewski S."/>
            <person name="Krajewska M."/>
            <person name="Xie Z."/>
            <person name="Fuess S."/>
            <person name="Kitada S."/>
            <person name="Pawlowski K."/>
            <person name="Godzik A."/>
            <person name="Reed J.C."/>
        </authorList>
    </citation>
    <scope>NUCLEOTIDE SEQUENCE [MRNA] (ISOFORM 1)</scope>
    <scope>INTERACTION WITH CASP8; BCL2 AND BCL2L1</scope>
    <scope>SUBCELLULAR LOCATION</scope>
    <scope>TISSUE SPECIFICITY</scope>
    <source>
        <tissue>Hepatoma</tissue>
    </source>
</reference>
<reference key="2">
    <citation type="journal article" date="2004" name="Nat. Genet.">
        <title>Complete sequencing and characterization of 21,243 full-length human cDNAs.</title>
        <authorList>
            <person name="Ota T."/>
            <person name="Suzuki Y."/>
            <person name="Nishikawa T."/>
            <person name="Otsuki T."/>
            <person name="Sugiyama T."/>
            <person name="Irie R."/>
            <person name="Wakamatsu A."/>
            <person name="Hayashi K."/>
            <person name="Sato H."/>
            <person name="Nagai K."/>
            <person name="Kimura K."/>
            <person name="Makita H."/>
            <person name="Sekine M."/>
            <person name="Obayashi M."/>
            <person name="Nishi T."/>
            <person name="Shibahara T."/>
            <person name="Tanaka T."/>
            <person name="Ishii S."/>
            <person name="Yamamoto J."/>
            <person name="Saito K."/>
            <person name="Kawai Y."/>
            <person name="Isono Y."/>
            <person name="Nakamura Y."/>
            <person name="Nagahari K."/>
            <person name="Murakami K."/>
            <person name="Yasuda T."/>
            <person name="Iwayanagi T."/>
            <person name="Wagatsuma M."/>
            <person name="Shiratori A."/>
            <person name="Sudo H."/>
            <person name="Hosoiri T."/>
            <person name="Kaku Y."/>
            <person name="Kodaira H."/>
            <person name="Kondo H."/>
            <person name="Sugawara M."/>
            <person name="Takahashi M."/>
            <person name="Kanda K."/>
            <person name="Yokoi T."/>
            <person name="Furuya T."/>
            <person name="Kikkawa E."/>
            <person name="Omura Y."/>
            <person name="Abe K."/>
            <person name="Kamihara K."/>
            <person name="Katsuta N."/>
            <person name="Sato K."/>
            <person name="Tanikawa M."/>
            <person name="Yamazaki M."/>
            <person name="Ninomiya K."/>
            <person name="Ishibashi T."/>
            <person name="Yamashita H."/>
            <person name="Murakawa K."/>
            <person name="Fujimori K."/>
            <person name="Tanai H."/>
            <person name="Kimata M."/>
            <person name="Watanabe M."/>
            <person name="Hiraoka S."/>
            <person name="Chiba Y."/>
            <person name="Ishida S."/>
            <person name="Ono Y."/>
            <person name="Takiguchi S."/>
            <person name="Watanabe S."/>
            <person name="Yosida M."/>
            <person name="Hotuta T."/>
            <person name="Kusano J."/>
            <person name="Kanehori K."/>
            <person name="Takahashi-Fujii A."/>
            <person name="Hara H."/>
            <person name="Tanase T.-O."/>
            <person name="Nomura Y."/>
            <person name="Togiya S."/>
            <person name="Komai F."/>
            <person name="Hara R."/>
            <person name="Takeuchi K."/>
            <person name="Arita M."/>
            <person name="Imose N."/>
            <person name="Musashino K."/>
            <person name="Yuuki H."/>
            <person name="Oshima A."/>
            <person name="Sasaki N."/>
            <person name="Aotsuka S."/>
            <person name="Yoshikawa Y."/>
            <person name="Matsunawa H."/>
            <person name="Ichihara T."/>
            <person name="Shiohata N."/>
            <person name="Sano S."/>
            <person name="Moriya S."/>
            <person name="Momiyama H."/>
            <person name="Satoh N."/>
            <person name="Takami S."/>
            <person name="Terashima Y."/>
            <person name="Suzuki O."/>
            <person name="Nakagawa S."/>
            <person name="Senoh A."/>
            <person name="Mizoguchi H."/>
            <person name="Goto Y."/>
            <person name="Shimizu F."/>
            <person name="Wakebe H."/>
            <person name="Hishigaki H."/>
            <person name="Watanabe T."/>
            <person name="Sugiyama A."/>
            <person name="Takemoto M."/>
            <person name="Kawakami B."/>
            <person name="Yamazaki M."/>
            <person name="Watanabe K."/>
            <person name="Kumagai A."/>
            <person name="Itakura S."/>
            <person name="Fukuzumi Y."/>
            <person name="Fujimori Y."/>
            <person name="Komiyama M."/>
            <person name="Tashiro H."/>
            <person name="Tanigami A."/>
            <person name="Fujiwara T."/>
            <person name="Ono T."/>
            <person name="Yamada K."/>
            <person name="Fujii Y."/>
            <person name="Ozaki K."/>
            <person name="Hirao M."/>
            <person name="Ohmori Y."/>
            <person name="Kawabata A."/>
            <person name="Hikiji T."/>
            <person name="Kobatake N."/>
            <person name="Inagaki H."/>
            <person name="Ikema Y."/>
            <person name="Okamoto S."/>
            <person name="Okitani R."/>
            <person name="Kawakami T."/>
            <person name="Noguchi S."/>
            <person name="Itoh T."/>
            <person name="Shigeta K."/>
            <person name="Senba T."/>
            <person name="Matsumura K."/>
            <person name="Nakajima Y."/>
            <person name="Mizuno T."/>
            <person name="Morinaga M."/>
            <person name="Sasaki M."/>
            <person name="Togashi T."/>
            <person name="Oyama M."/>
            <person name="Hata H."/>
            <person name="Watanabe M."/>
            <person name="Komatsu T."/>
            <person name="Mizushima-Sugano J."/>
            <person name="Satoh T."/>
            <person name="Shirai Y."/>
            <person name="Takahashi Y."/>
            <person name="Nakagawa K."/>
            <person name="Okumura K."/>
            <person name="Nagase T."/>
            <person name="Nomura N."/>
            <person name="Kikuchi H."/>
            <person name="Masuho Y."/>
            <person name="Yamashita R."/>
            <person name="Nakai K."/>
            <person name="Yada T."/>
            <person name="Nakamura Y."/>
            <person name="Ohara O."/>
            <person name="Isogai T."/>
            <person name="Sugano S."/>
        </authorList>
    </citation>
    <scope>NUCLEOTIDE SEQUENCE [LARGE SCALE MRNA] (ISOFORM 1)</scope>
</reference>
<reference key="3">
    <citation type="journal article" date="2004" name="Nature">
        <title>The sequence and analysis of duplication-rich human chromosome 16.</title>
        <authorList>
            <person name="Martin J."/>
            <person name="Han C."/>
            <person name="Gordon L.A."/>
            <person name="Terry A."/>
            <person name="Prabhakar S."/>
            <person name="She X."/>
            <person name="Xie G."/>
            <person name="Hellsten U."/>
            <person name="Chan Y.M."/>
            <person name="Altherr M."/>
            <person name="Couronne O."/>
            <person name="Aerts A."/>
            <person name="Bajorek E."/>
            <person name="Black S."/>
            <person name="Blumer H."/>
            <person name="Branscomb E."/>
            <person name="Brown N.C."/>
            <person name="Bruno W.J."/>
            <person name="Buckingham J.M."/>
            <person name="Callen D.F."/>
            <person name="Campbell C.S."/>
            <person name="Campbell M.L."/>
            <person name="Campbell E.W."/>
            <person name="Caoile C."/>
            <person name="Challacombe J.F."/>
            <person name="Chasteen L.A."/>
            <person name="Chertkov O."/>
            <person name="Chi H.C."/>
            <person name="Christensen M."/>
            <person name="Clark L.M."/>
            <person name="Cohn J.D."/>
            <person name="Denys M."/>
            <person name="Detter J.C."/>
            <person name="Dickson M."/>
            <person name="Dimitrijevic-Bussod M."/>
            <person name="Escobar J."/>
            <person name="Fawcett J.J."/>
            <person name="Flowers D."/>
            <person name="Fotopulos D."/>
            <person name="Glavina T."/>
            <person name="Gomez M."/>
            <person name="Gonzales E."/>
            <person name="Goodstein D."/>
            <person name="Goodwin L.A."/>
            <person name="Grady D.L."/>
            <person name="Grigoriev I."/>
            <person name="Groza M."/>
            <person name="Hammon N."/>
            <person name="Hawkins T."/>
            <person name="Haydu L."/>
            <person name="Hildebrand C.E."/>
            <person name="Huang W."/>
            <person name="Israni S."/>
            <person name="Jett J."/>
            <person name="Jewett P.B."/>
            <person name="Kadner K."/>
            <person name="Kimball H."/>
            <person name="Kobayashi A."/>
            <person name="Krawczyk M.-C."/>
            <person name="Leyba T."/>
            <person name="Longmire J.L."/>
            <person name="Lopez F."/>
            <person name="Lou Y."/>
            <person name="Lowry S."/>
            <person name="Ludeman T."/>
            <person name="Manohar C.F."/>
            <person name="Mark G.A."/>
            <person name="McMurray K.L."/>
            <person name="Meincke L.J."/>
            <person name="Morgan J."/>
            <person name="Moyzis R.K."/>
            <person name="Mundt M.O."/>
            <person name="Munk A.C."/>
            <person name="Nandkeshwar R.D."/>
            <person name="Pitluck S."/>
            <person name="Pollard M."/>
            <person name="Predki P."/>
            <person name="Parson-Quintana B."/>
            <person name="Ramirez L."/>
            <person name="Rash S."/>
            <person name="Retterer J."/>
            <person name="Ricke D.O."/>
            <person name="Robinson D.L."/>
            <person name="Rodriguez A."/>
            <person name="Salamov A."/>
            <person name="Saunders E.H."/>
            <person name="Scott D."/>
            <person name="Shough T."/>
            <person name="Stallings R.L."/>
            <person name="Stalvey M."/>
            <person name="Sutherland R.D."/>
            <person name="Tapia R."/>
            <person name="Tesmer J.G."/>
            <person name="Thayer N."/>
            <person name="Thompson L.S."/>
            <person name="Tice H."/>
            <person name="Torney D.C."/>
            <person name="Tran-Gyamfi M."/>
            <person name="Tsai M."/>
            <person name="Ulanovsky L.E."/>
            <person name="Ustaszewska A."/>
            <person name="Vo N."/>
            <person name="White P.S."/>
            <person name="Williams A.L."/>
            <person name="Wills P.L."/>
            <person name="Wu J.-R."/>
            <person name="Wu K."/>
            <person name="Yang J."/>
            <person name="DeJong P."/>
            <person name="Bruce D."/>
            <person name="Doggett N.A."/>
            <person name="Deaven L."/>
            <person name="Schmutz J."/>
            <person name="Grimwood J."/>
            <person name="Richardson P."/>
            <person name="Rokhsar D.S."/>
            <person name="Eichler E.E."/>
            <person name="Gilna P."/>
            <person name="Lucas S.M."/>
            <person name="Myers R.M."/>
            <person name="Rubin E.M."/>
            <person name="Pennacchio L.A."/>
        </authorList>
    </citation>
    <scope>NUCLEOTIDE SEQUENCE [LARGE SCALE GENOMIC DNA]</scope>
</reference>
<reference key="4">
    <citation type="submission" date="2005-09" db="EMBL/GenBank/DDBJ databases">
        <authorList>
            <person name="Mural R.J."/>
            <person name="Istrail S."/>
            <person name="Sutton G.G."/>
            <person name="Florea L."/>
            <person name="Halpern A.L."/>
            <person name="Mobarry C.M."/>
            <person name="Lippert R."/>
            <person name="Walenz B."/>
            <person name="Shatkay H."/>
            <person name="Dew I."/>
            <person name="Miller J.R."/>
            <person name="Flanigan M.J."/>
            <person name="Edwards N.J."/>
            <person name="Bolanos R."/>
            <person name="Fasulo D."/>
            <person name="Halldorsson B.V."/>
            <person name="Hannenhalli S."/>
            <person name="Turner R."/>
            <person name="Yooseph S."/>
            <person name="Lu F."/>
            <person name="Nusskern D.R."/>
            <person name="Shue B.C."/>
            <person name="Zheng X.H."/>
            <person name="Zhong F."/>
            <person name="Delcher A.L."/>
            <person name="Huson D.H."/>
            <person name="Kravitz S.A."/>
            <person name="Mouchard L."/>
            <person name="Reinert K."/>
            <person name="Remington K.A."/>
            <person name="Clark A.G."/>
            <person name="Waterman M.S."/>
            <person name="Eichler E.E."/>
            <person name="Adams M.D."/>
            <person name="Hunkapiller M.W."/>
            <person name="Myers E.W."/>
            <person name="Venter J.C."/>
        </authorList>
    </citation>
    <scope>NUCLEOTIDE SEQUENCE [LARGE SCALE GENOMIC DNA]</scope>
</reference>
<reference key="5">
    <citation type="journal article" date="2004" name="Genome Res.">
        <title>The status, quality, and expansion of the NIH full-length cDNA project: the Mammalian Gene Collection (MGC).</title>
        <authorList>
            <consortium name="The MGC Project Team"/>
        </authorList>
    </citation>
    <scope>NUCLEOTIDE SEQUENCE [LARGE SCALE MRNA] (ISOFORM 1)</scope>
    <source>
        <tissue>Lung</tissue>
    </source>
</reference>
<reference key="6">
    <citation type="journal article" date="2003" name="Cell Death Differ.">
        <title>Bifunctional apoptosis inhibitor (BAR) protects neurons from diverse cell death pathways.</title>
        <authorList>
            <person name="Roth W."/>
            <person name="Kermer P."/>
            <person name="Krajewska M."/>
            <person name="Welsh K."/>
            <person name="Davis S."/>
            <person name="Krajewski S."/>
            <person name="Reed J.C."/>
        </authorList>
    </citation>
    <scope>FUNCTION</scope>
    <scope>SUBCELLULAR LOCATION</scope>
    <scope>INTERACTION WITH IFT57; HIP1; ESRRBL1 AND BCAP31</scope>
    <scope>TISSUE SPECIFICITY</scope>
</reference>
<reference key="7">
    <citation type="journal article" date="2011" name="J. Biol. Chem.">
        <title>Bifunctional apoptosis regulator (BAR), an endoplasmic reticulum (ER)-associated E3 ubiquitin ligase, modulates BI-1 protein stability and function in ER Stress.</title>
        <authorList>
            <person name="Rong J."/>
            <person name="Chen L."/>
            <person name="Toth J.I."/>
            <person name="Tcherpakov M."/>
            <person name="Petroski M.D."/>
            <person name="Reed J.C."/>
        </authorList>
    </citation>
    <scope>FUNCTION</scope>
    <scope>SUBCELLULAR LOCATION</scope>
    <scope>CATALYTIC ACTIVITY</scope>
    <scope>UBIQUITINATION</scope>
</reference>
<reference key="8">
    <citation type="journal article" date="2012" name="Sci. China Life Sci.">
        <title>p75NTR signal transduction suppressed by BFAR and p75NTR interactions.</title>
        <authorList>
            <person name="Li H."/>
            <person name="Shi H."/>
            <person name="Huo K."/>
        </authorList>
    </citation>
    <scope>FUNCTION</scope>
    <scope>SUBCELLULAR LOCATION</scope>
    <scope>INTERACTION WITH NGFR</scope>
</reference>
<reference key="9">
    <citation type="journal article" date="2021" name="J. Exp. Med.">
        <title>BFAR coordinates TGFbeta signaling to modulate Th9-mediated cancer immunotherapy.</title>
        <authorList>
            <person name="Pei S."/>
            <person name="Huang M."/>
            <person name="Huang J."/>
            <person name="Zhu X."/>
            <person name="Wang H."/>
            <person name="Romano S."/>
            <person name="Deng X."/>
            <person name="Wang Y."/>
            <person name="Luo Y."/>
            <person name="Hao S."/>
            <person name="Xu J."/>
            <person name="Yu T."/>
            <person name="Zhu Q."/>
            <person name="Yuan J."/>
            <person name="Shen K."/>
            <person name="Liu Z."/>
            <person name="Hu G."/>
            <person name="Peng C."/>
            <person name="Luo Q."/>
            <person name="Wen Z."/>
            <person name="Dai D."/>
            <person name="Xiao Y."/>
        </authorList>
    </citation>
    <scope>FUNCTION</scope>
    <scope>CATALYTIC ACTIVITY</scope>
</reference>
<reference key="10">
    <citation type="journal article" date="2024" name="Proc. Natl. Acad. Sci. U.S.A.">
        <title>The ubiquitin E3 ligase BFAR promotes degradation of PNPLA3.</title>
        <authorList>
            <person name="Das A."/>
            <person name="Cheng H."/>
            <person name="Wang Y."/>
            <person name="Kinch L.N."/>
            <person name="Liang G."/>
            <person name="Hong S."/>
            <person name="Hobbs H.H."/>
            <person name="Cohen J.C."/>
        </authorList>
    </citation>
    <scope>FUNCTION</scope>
    <scope>CATALYTIC ACTIVITY</scope>
</reference>
<name>BFAR_HUMAN</name>
<proteinExistence type="evidence at protein level"/>
<sequence>MEEPQKSYVNTMDLERDEPLKSTGPQISVSEFSCHCCYDILVNPTTLNCGHSFCRHCLALWWASSKKTECPECREKWEGFPKVSILLRDAIEKLFPDAIRLRFEDIQQNNDIVQSLAAFQKYGNDQIPLAPNTGRANQQMGGGFFSGVLTALTGVAVVLLVYHWSSRESEHDLLVHKAVAKWTAEEVVLWLEQLGPWASLYRERFLSERVNGRLLLTLTEEEFSKTPYTIENSSHRRAILMELERVKALGVKPPQNLWEYKAVNPGRSLFLLYALKSSPRLSLLYLYLFDYTDTFLPFIHTICPLQEDSSGEDIVTKLLDLKEPTWKQWREFLVKYSFLPYQLIAEFAWDWLEVHYWTSRFLIINAMLLSVLELFSFWRIWSRSELKTVPQRMWSHFWKVSTQGLFVAMFWPLIPQFVCNCLFYWALYFNPIINIDLVVKELRRLETQVL</sequence>